<evidence type="ECO:0000256" key="1">
    <source>
        <dbReference type="SAM" id="MobiDB-lite"/>
    </source>
</evidence>
<evidence type="ECO:0000305" key="2"/>
<evidence type="ECO:0000312" key="3">
    <source>
        <dbReference type="WormBase" id="D1007.12"/>
    </source>
</evidence>
<accession>O01868</accession>
<gene>
    <name evidence="3" type="primary">rpl-24</name>
    <name evidence="3" type="ORF">D1007.12</name>
</gene>
<sequence>MKVETCVYSGYKIHPGHGKRLVRTDGKVQIFLSGKALKGAKLRRNPRDIRWTVLYRIKNKKGTHGQEQVTRKKTKKSVQVVNRAVAGLSLDAILAKRNQTEDFRRQQREQAAKIAKDANKAVRAAKAAANKEKKASQPKTQQKTAKNVKTAAPRVGGKR</sequence>
<comment type="similarity">
    <text evidence="2">Belongs to the eukaryotic ribosomal protein eL24 family.</text>
</comment>
<name>RL24_CAEEL</name>
<reference key="1">
    <citation type="journal article" date="1998" name="Science">
        <title>Genome sequence of the nematode C. elegans: a platform for investigating biology.</title>
        <authorList>
            <consortium name="The C. elegans sequencing consortium"/>
        </authorList>
    </citation>
    <scope>NUCLEOTIDE SEQUENCE [LARGE SCALE GENOMIC DNA]</scope>
    <source>
        <strain>Bristol N2</strain>
    </source>
</reference>
<keyword id="KW-0002">3D-structure</keyword>
<keyword id="KW-1185">Reference proteome</keyword>
<keyword id="KW-0687">Ribonucleoprotein</keyword>
<keyword id="KW-0689">Ribosomal protein</keyword>
<feature type="chain" id="PRO_0000136876" description="Large ribosomal subunit protein eL24">
    <location>
        <begin position="1"/>
        <end position="159"/>
    </location>
</feature>
<feature type="region of interest" description="Disordered" evidence="1">
    <location>
        <begin position="118"/>
        <end position="159"/>
    </location>
</feature>
<feature type="compositionally biased region" description="Polar residues" evidence="1">
    <location>
        <begin position="137"/>
        <end position="147"/>
    </location>
</feature>
<proteinExistence type="evidence at protein level"/>
<protein>
    <recommendedName>
        <fullName evidence="2">Large ribosomal subunit protein eL24</fullName>
    </recommendedName>
    <alternativeName>
        <fullName>60S ribosomal protein L24</fullName>
    </alternativeName>
</protein>
<organism>
    <name type="scientific">Caenorhabditis elegans</name>
    <dbReference type="NCBI Taxonomy" id="6239"/>
    <lineage>
        <taxon>Eukaryota</taxon>
        <taxon>Metazoa</taxon>
        <taxon>Ecdysozoa</taxon>
        <taxon>Nematoda</taxon>
        <taxon>Chromadorea</taxon>
        <taxon>Rhabditida</taxon>
        <taxon>Rhabditina</taxon>
        <taxon>Rhabditomorpha</taxon>
        <taxon>Rhabditoidea</taxon>
        <taxon>Rhabditidae</taxon>
        <taxon>Peloderinae</taxon>
        <taxon>Caenorhabditis</taxon>
    </lineage>
</organism>
<dbReference type="EMBL" id="FO080863">
    <property type="protein sequence ID" value="CCD67324.1"/>
    <property type="molecule type" value="Genomic_DNA"/>
</dbReference>
<dbReference type="PIR" id="T30926">
    <property type="entry name" value="T30926"/>
</dbReference>
<dbReference type="PDB" id="9BH5">
    <property type="method" value="EM"/>
    <property type="resolution" value="2.63 A"/>
    <property type="chains" value="CW=1-159"/>
</dbReference>
<dbReference type="PDB" id="9CAI">
    <property type="method" value="EM"/>
    <property type="resolution" value="2.59 A"/>
    <property type="chains" value="CW=1-159"/>
</dbReference>
<dbReference type="PDBsum" id="9BH5"/>
<dbReference type="PDBsum" id="9CAI"/>
<dbReference type="EMDB" id="EMD-44533"/>
<dbReference type="EMDB" id="EMD-45392"/>
<dbReference type="SMR" id="O01868"/>
<dbReference type="BioGRID" id="37527">
    <property type="interactions" value="98"/>
</dbReference>
<dbReference type="FunCoup" id="O01868">
    <property type="interactions" value="2223"/>
</dbReference>
<dbReference type="IntAct" id="O01868">
    <property type="interactions" value="4"/>
</dbReference>
<dbReference type="MINT" id="O01868"/>
<dbReference type="STRING" id="6239.D1007.12.1"/>
<dbReference type="iPTMnet" id="O01868"/>
<dbReference type="PaxDb" id="6239-D1007.12.2"/>
<dbReference type="PeptideAtlas" id="O01868"/>
<dbReference type="EnsemblMetazoa" id="D1007.12.1">
    <property type="protein sequence ID" value="D1007.12.1"/>
    <property type="gene ID" value="WBGene00004436"/>
</dbReference>
<dbReference type="KEGG" id="cel:CELE_D1007.12"/>
<dbReference type="UCSC" id="D1007.12.1">
    <property type="organism name" value="c. elegans"/>
</dbReference>
<dbReference type="AGR" id="WB:WBGene00004436"/>
<dbReference type="CTD" id="172062"/>
<dbReference type="WormBase" id="D1007.12">
    <property type="protein sequence ID" value="CE09047"/>
    <property type="gene ID" value="WBGene00004436"/>
    <property type="gene designation" value="rpl-24"/>
</dbReference>
<dbReference type="eggNOG" id="KOG1722">
    <property type="taxonomic scope" value="Eukaryota"/>
</dbReference>
<dbReference type="GeneTree" id="ENSGT00950000183105"/>
<dbReference type="HOGENOM" id="CLU_106411_1_0_1"/>
<dbReference type="InParanoid" id="O01868"/>
<dbReference type="OMA" id="PGHGKKM"/>
<dbReference type="OrthoDB" id="1727108at2759"/>
<dbReference type="PhylomeDB" id="O01868"/>
<dbReference type="Reactome" id="R-CEL-156827">
    <property type="pathway name" value="L13a-mediated translational silencing of Ceruloplasmin expression"/>
</dbReference>
<dbReference type="Reactome" id="R-CEL-1799339">
    <property type="pathway name" value="SRP-dependent cotranslational protein targeting to membrane"/>
</dbReference>
<dbReference type="Reactome" id="R-CEL-72689">
    <property type="pathway name" value="Formation of a pool of free 40S subunits"/>
</dbReference>
<dbReference type="Reactome" id="R-CEL-72706">
    <property type="pathway name" value="GTP hydrolysis and joining of the 60S ribosomal subunit"/>
</dbReference>
<dbReference type="Reactome" id="R-CEL-975956">
    <property type="pathway name" value="Nonsense Mediated Decay (NMD) independent of the Exon Junction Complex (EJC)"/>
</dbReference>
<dbReference type="Reactome" id="R-CEL-975957">
    <property type="pathway name" value="Nonsense Mediated Decay (NMD) enhanced by the Exon Junction Complex (EJC)"/>
</dbReference>
<dbReference type="SignaLink" id="O01868"/>
<dbReference type="PRO" id="PR:O01868"/>
<dbReference type="Proteomes" id="UP000001940">
    <property type="component" value="Chromosome I"/>
</dbReference>
<dbReference type="Bgee" id="WBGene00004436">
    <property type="expression patterns" value="Expressed in pharyngeal muscle cell (C elegans) and 3 other cell types or tissues"/>
</dbReference>
<dbReference type="GO" id="GO:0022625">
    <property type="term" value="C:cytosolic large ribosomal subunit"/>
    <property type="evidence" value="ECO:0000318"/>
    <property type="project" value="GO_Central"/>
</dbReference>
<dbReference type="GO" id="GO:0003729">
    <property type="term" value="F:mRNA binding"/>
    <property type="evidence" value="ECO:0000318"/>
    <property type="project" value="GO_Central"/>
</dbReference>
<dbReference type="GO" id="GO:0003735">
    <property type="term" value="F:structural constituent of ribosome"/>
    <property type="evidence" value="ECO:0000318"/>
    <property type="project" value="GO_Central"/>
</dbReference>
<dbReference type="GO" id="GO:0002181">
    <property type="term" value="P:cytoplasmic translation"/>
    <property type="evidence" value="ECO:0000318"/>
    <property type="project" value="GO_Central"/>
</dbReference>
<dbReference type="CDD" id="cd00472">
    <property type="entry name" value="Ribosomal_L24e_L24"/>
    <property type="match status" value="1"/>
</dbReference>
<dbReference type="Gene3D" id="6.10.250.1270">
    <property type="match status" value="1"/>
</dbReference>
<dbReference type="Gene3D" id="2.30.170.20">
    <property type="entry name" value="Ribosomal protein L24e"/>
    <property type="match status" value="1"/>
</dbReference>
<dbReference type="InterPro" id="IPR038630">
    <property type="entry name" value="L24e/L24_sf"/>
</dbReference>
<dbReference type="InterPro" id="IPR056366">
    <property type="entry name" value="Ribosomal_eL24"/>
</dbReference>
<dbReference type="InterPro" id="IPR000988">
    <property type="entry name" value="Ribosomal_eL24-rel_N"/>
</dbReference>
<dbReference type="PANTHER" id="PTHR10792">
    <property type="entry name" value="60S RIBOSOMAL PROTEIN L24"/>
    <property type="match status" value="1"/>
</dbReference>
<dbReference type="PANTHER" id="PTHR10792:SF1">
    <property type="entry name" value="RIBOSOMAL PROTEIN L24"/>
    <property type="match status" value="1"/>
</dbReference>
<dbReference type="Pfam" id="PF01246">
    <property type="entry name" value="Ribosomal_L24e"/>
    <property type="match status" value="1"/>
</dbReference>
<dbReference type="SUPFAM" id="SSF57716">
    <property type="entry name" value="Glucocorticoid receptor-like (DNA-binding domain)"/>
    <property type="match status" value="1"/>
</dbReference>